<comment type="function">
    <text evidence="1">Catalyzes the ferrous insertion into protoporphyrin IX.</text>
</comment>
<comment type="catalytic activity">
    <reaction evidence="1">
        <text>heme b + 2 H(+) = protoporphyrin IX + Fe(2+)</text>
        <dbReference type="Rhea" id="RHEA:22584"/>
        <dbReference type="ChEBI" id="CHEBI:15378"/>
        <dbReference type="ChEBI" id="CHEBI:29033"/>
        <dbReference type="ChEBI" id="CHEBI:57306"/>
        <dbReference type="ChEBI" id="CHEBI:60344"/>
        <dbReference type="EC" id="4.98.1.1"/>
    </reaction>
</comment>
<comment type="pathway">
    <text evidence="1">Porphyrin-containing compound metabolism; protoheme biosynthesis; protoheme from protoporphyrin-IX: step 1/1.</text>
</comment>
<comment type="subcellular location">
    <subcellularLocation>
        <location evidence="1">Cytoplasm</location>
    </subcellularLocation>
</comment>
<comment type="similarity">
    <text evidence="1">Belongs to the ferrochelatase family.</text>
</comment>
<name>HEMH_IDILO</name>
<reference key="1">
    <citation type="journal article" date="2004" name="Proc. Natl. Acad. Sci. U.S.A.">
        <title>Genome sequence of the deep-sea gamma-proteobacterium Idiomarina loihiensis reveals amino acid fermentation as a source of carbon and energy.</title>
        <authorList>
            <person name="Hou S."/>
            <person name="Saw J.H."/>
            <person name="Lee K.S."/>
            <person name="Freitas T.A."/>
            <person name="Belisle C."/>
            <person name="Kawarabayasi Y."/>
            <person name="Donachie S.P."/>
            <person name="Pikina A."/>
            <person name="Galperin M.Y."/>
            <person name="Koonin E.V."/>
            <person name="Makarova K.S."/>
            <person name="Omelchenko M.V."/>
            <person name="Sorokin A."/>
            <person name="Wolf Y.I."/>
            <person name="Li Q.X."/>
            <person name="Keum Y.S."/>
            <person name="Campbell S."/>
            <person name="Denery J."/>
            <person name="Aizawa S."/>
            <person name="Shibata S."/>
            <person name="Malahoff A."/>
            <person name="Alam M."/>
        </authorList>
    </citation>
    <scope>NUCLEOTIDE SEQUENCE [LARGE SCALE GENOMIC DNA]</scope>
    <source>
        <strain>ATCC BAA-735 / DSM 15497 / L2-TR</strain>
    </source>
</reference>
<evidence type="ECO:0000255" key="1">
    <source>
        <dbReference type="HAMAP-Rule" id="MF_00323"/>
    </source>
</evidence>
<feature type="chain" id="PRO_0000175151" description="Ferrochelatase">
    <location>
        <begin position="1"/>
        <end position="364"/>
    </location>
</feature>
<feature type="binding site" evidence="1">
    <location>
        <position position="210"/>
    </location>
    <ligand>
        <name>Fe cation</name>
        <dbReference type="ChEBI" id="CHEBI:24875"/>
    </ligand>
</feature>
<feature type="binding site" evidence="1">
    <location>
        <position position="291"/>
    </location>
    <ligand>
        <name>Fe cation</name>
        <dbReference type="ChEBI" id="CHEBI:24875"/>
    </ligand>
</feature>
<gene>
    <name evidence="1" type="primary">hemH</name>
    <name type="ordered locus">IL2347</name>
</gene>
<dbReference type="EC" id="4.98.1.1" evidence="1"/>
<dbReference type="EMBL" id="AE017340">
    <property type="protein sequence ID" value="AAV83179.1"/>
    <property type="molecule type" value="Genomic_DNA"/>
</dbReference>
<dbReference type="RefSeq" id="WP_011235573.1">
    <property type="nucleotide sequence ID" value="NC_006512.1"/>
</dbReference>
<dbReference type="SMR" id="Q5QVZ8"/>
<dbReference type="STRING" id="283942.IL2347"/>
<dbReference type="GeneID" id="41337542"/>
<dbReference type="KEGG" id="ilo:IL2347"/>
<dbReference type="eggNOG" id="COG0276">
    <property type="taxonomic scope" value="Bacteria"/>
</dbReference>
<dbReference type="HOGENOM" id="CLU_018884_0_0_6"/>
<dbReference type="OrthoDB" id="9809741at2"/>
<dbReference type="UniPathway" id="UPA00252">
    <property type="reaction ID" value="UER00325"/>
</dbReference>
<dbReference type="Proteomes" id="UP000001171">
    <property type="component" value="Chromosome"/>
</dbReference>
<dbReference type="GO" id="GO:0005737">
    <property type="term" value="C:cytoplasm"/>
    <property type="evidence" value="ECO:0007669"/>
    <property type="project" value="UniProtKB-SubCell"/>
</dbReference>
<dbReference type="GO" id="GO:0004325">
    <property type="term" value="F:ferrochelatase activity"/>
    <property type="evidence" value="ECO:0007669"/>
    <property type="project" value="UniProtKB-UniRule"/>
</dbReference>
<dbReference type="GO" id="GO:0046872">
    <property type="term" value="F:metal ion binding"/>
    <property type="evidence" value="ECO:0007669"/>
    <property type="project" value="UniProtKB-KW"/>
</dbReference>
<dbReference type="GO" id="GO:0006783">
    <property type="term" value="P:heme biosynthetic process"/>
    <property type="evidence" value="ECO:0007669"/>
    <property type="project" value="UniProtKB-UniRule"/>
</dbReference>
<dbReference type="CDD" id="cd00419">
    <property type="entry name" value="Ferrochelatase_C"/>
    <property type="match status" value="1"/>
</dbReference>
<dbReference type="CDD" id="cd03411">
    <property type="entry name" value="Ferrochelatase_N"/>
    <property type="match status" value="1"/>
</dbReference>
<dbReference type="FunFam" id="3.40.50.1400:FF:000002">
    <property type="entry name" value="Ferrochelatase"/>
    <property type="match status" value="1"/>
</dbReference>
<dbReference type="Gene3D" id="3.40.50.1400">
    <property type="match status" value="2"/>
</dbReference>
<dbReference type="HAMAP" id="MF_00323">
    <property type="entry name" value="Ferrochelatase"/>
    <property type="match status" value="1"/>
</dbReference>
<dbReference type="InterPro" id="IPR001015">
    <property type="entry name" value="Ferrochelatase"/>
</dbReference>
<dbReference type="InterPro" id="IPR019772">
    <property type="entry name" value="Ferrochelatase_AS"/>
</dbReference>
<dbReference type="InterPro" id="IPR033644">
    <property type="entry name" value="Ferrochelatase_C"/>
</dbReference>
<dbReference type="InterPro" id="IPR033659">
    <property type="entry name" value="Ferrochelatase_N"/>
</dbReference>
<dbReference type="NCBIfam" id="TIGR00109">
    <property type="entry name" value="hemH"/>
    <property type="match status" value="1"/>
</dbReference>
<dbReference type="PANTHER" id="PTHR11108">
    <property type="entry name" value="FERROCHELATASE"/>
    <property type="match status" value="1"/>
</dbReference>
<dbReference type="PANTHER" id="PTHR11108:SF1">
    <property type="entry name" value="FERROCHELATASE, MITOCHONDRIAL"/>
    <property type="match status" value="1"/>
</dbReference>
<dbReference type="Pfam" id="PF00762">
    <property type="entry name" value="Ferrochelatase"/>
    <property type="match status" value="1"/>
</dbReference>
<dbReference type="SUPFAM" id="SSF53800">
    <property type="entry name" value="Chelatase"/>
    <property type="match status" value="1"/>
</dbReference>
<dbReference type="PROSITE" id="PS00534">
    <property type="entry name" value="FERROCHELATASE"/>
    <property type="match status" value="1"/>
</dbReference>
<keyword id="KW-0963">Cytoplasm</keyword>
<keyword id="KW-0350">Heme biosynthesis</keyword>
<keyword id="KW-0408">Iron</keyword>
<keyword id="KW-0456">Lyase</keyword>
<keyword id="KW-0479">Metal-binding</keyword>
<keyword id="KW-0627">Porphyrin biosynthesis</keyword>
<keyword id="KW-1185">Reference proteome</keyword>
<organism>
    <name type="scientific">Idiomarina loihiensis (strain ATCC BAA-735 / DSM 15497 / L2-TR)</name>
    <dbReference type="NCBI Taxonomy" id="283942"/>
    <lineage>
        <taxon>Bacteria</taxon>
        <taxon>Pseudomonadati</taxon>
        <taxon>Pseudomonadota</taxon>
        <taxon>Gammaproteobacteria</taxon>
        <taxon>Alteromonadales</taxon>
        <taxon>Idiomarinaceae</taxon>
        <taxon>Idiomarina</taxon>
    </lineage>
</organism>
<sequence length="364" mass="41722">MKYQGSPGFSHGQADKIGVLVTNLGTPEAPTKKALKPYLKEFLSDPRVVEVPRLLWFLILNGVILRFRPKRSAEAYKTVWTDRGSPLLFHTQDQASAIEAKLKQTWGDNIVVDFAMRYGNPALSEVVEKMMQKGVRKLLVLPLYPQYSASTTASTFDALAKDFTKRRWLPELRFITHYHDFSPFIEAAAQRIEKHWDAHGRADKLLFSYHGIPLRYLKNGDPYHCECYKTSRLLAERLGLGKDEYLTTFQSRFGREEWLQPYTDMTMKALPGKGVKSVQVFCPGFSSDCLETVEEIGEENREYFMESGGERYEYISALNAESGHIDALSQLIENNLQGWSVEDVTEQRQQRADQVKKQSLPYDD</sequence>
<proteinExistence type="inferred from homology"/>
<protein>
    <recommendedName>
        <fullName evidence="1">Ferrochelatase</fullName>
        <ecNumber evidence="1">4.98.1.1</ecNumber>
    </recommendedName>
    <alternativeName>
        <fullName evidence="1">Heme synthase</fullName>
    </alternativeName>
    <alternativeName>
        <fullName evidence="1">Protoheme ferro-lyase</fullName>
    </alternativeName>
</protein>
<accession>Q5QVZ8</accession>